<sequence>MSRESAGAAIRALRESRDWSLADLAAATGVSTMGLSYLERGARKPHKSTVQKVENGLGLPPGTYSRLLVAADPDAELARLIAAQPSNPTAVRRAGAVVVDRHSDTDVLEGYAEAQLDAIKSVIDRLPATTSNEYETYILSVIAQCVKAEMLAASSWRVAVNAGADSTGRLMEHLRALEATRGALLERMPTSLSARFDRACAQSSLPEAVVAALIGVGADEMWDIRNRGVIPAGALPRVRAFVDAIEASHDADEGQQ</sequence>
<name>Y023_MYCTO</name>
<evidence type="ECO:0000255" key="1">
    <source>
        <dbReference type="PROSITE-ProRule" id="PRU00257"/>
    </source>
</evidence>
<protein>
    <recommendedName>
        <fullName>Uncharacterized HTH-type transcriptional regulator MT0026</fullName>
    </recommendedName>
</protein>
<proteinExistence type="predicted"/>
<accession>P9WMI2</accession>
<accession>L0T2B8</accession>
<accession>P67704</accession>
<accession>P71593</accession>
<keyword id="KW-0238">DNA-binding</keyword>
<keyword id="KW-1185">Reference proteome</keyword>
<keyword id="KW-0804">Transcription</keyword>
<keyword id="KW-0805">Transcription regulation</keyword>
<organism>
    <name type="scientific">Mycobacterium tuberculosis (strain CDC 1551 / Oshkosh)</name>
    <dbReference type="NCBI Taxonomy" id="83331"/>
    <lineage>
        <taxon>Bacteria</taxon>
        <taxon>Bacillati</taxon>
        <taxon>Actinomycetota</taxon>
        <taxon>Actinomycetes</taxon>
        <taxon>Mycobacteriales</taxon>
        <taxon>Mycobacteriaceae</taxon>
        <taxon>Mycobacterium</taxon>
        <taxon>Mycobacterium tuberculosis complex</taxon>
    </lineage>
</organism>
<gene>
    <name type="ordered locus">MT0026</name>
</gene>
<dbReference type="EMBL" id="AE000516">
    <property type="protein sequence ID" value="AAK44248.1"/>
    <property type="molecule type" value="Genomic_DNA"/>
</dbReference>
<dbReference type="PIR" id="E70700">
    <property type="entry name" value="E70700"/>
</dbReference>
<dbReference type="RefSeq" id="WP_003400391.1">
    <property type="nucleotide sequence ID" value="NZ_KK341227.1"/>
</dbReference>
<dbReference type="SMR" id="P9WMI2"/>
<dbReference type="KEGG" id="mtc:MT0026"/>
<dbReference type="PATRIC" id="fig|83331.31.peg.28"/>
<dbReference type="HOGENOM" id="CLU_1060979_0_0_11"/>
<dbReference type="Proteomes" id="UP000001020">
    <property type="component" value="Chromosome"/>
</dbReference>
<dbReference type="GO" id="GO:0003677">
    <property type="term" value="F:DNA binding"/>
    <property type="evidence" value="ECO:0007669"/>
    <property type="project" value="UniProtKB-KW"/>
</dbReference>
<dbReference type="CDD" id="cd00093">
    <property type="entry name" value="HTH_XRE"/>
    <property type="match status" value="1"/>
</dbReference>
<dbReference type="Gene3D" id="1.10.260.40">
    <property type="entry name" value="lambda repressor-like DNA-binding domains"/>
    <property type="match status" value="1"/>
</dbReference>
<dbReference type="InterPro" id="IPR001387">
    <property type="entry name" value="Cro/C1-type_HTH"/>
</dbReference>
<dbReference type="InterPro" id="IPR010982">
    <property type="entry name" value="Lambda_DNA-bd_dom_sf"/>
</dbReference>
<dbReference type="Pfam" id="PF01381">
    <property type="entry name" value="HTH_3"/>
    <property type="match status" value="1"/>
</dbReference>
<dbReference type="SMART" id="SM00530">
    <property type="entry name" value="HTH_XRE"/>
    <property type="match status" value="1"/>
</dbReference>
<dbReference type="SUPFAM" id="SSF47413">
    <property type="entry name" value="lambda repressor-like DNA-binding domains"/>
    <property type="match status" value="1"/>
</dbReference>
<dbReference type="PROSITE" id="PS50943">
    <property type="entry name" value="HTH_CROC1"/>
    <property type="match status" value="1"/>
</dbReference>
<feature type="chain" id="PRO_0000427299" description="Uncharacterized HTH-type transcriptional regulator MT0026">
    <location>
        <begin position="1"/>
        <end position="256"/>
    </location>
</feature>
<feature type="domain" description="HTH cro/C1-type" evidence="1">
    <location>
        <begin position="10"/>
        <end position="64"/>
    </location>
</feature>
<feature type="DNA-binding region" description="H-T-H motif" evidence="1">
    <location>
        <begin position="21"/>
        <end position="40"/>
    </location>
</feature>
<reference key="1">
    <citation type="journal article" date="2002" name="J. Bacteriol.">
        <title>Whole-genome comparison of Mycobacterium tuberculosis clinical and laboratory strains.</title>
        <authorList>
            <person name="Fleischmann R.D."/>
            <person name="Alland D."/>
            <person name="Eisen J.A."/>
            <person name="Carpenter L."/>
            <person name="White O."/>
            <person name="Peterson J.D."/>
            <person name="DeBoy R.T."/>
            <person name="Dodson R.J."/>
            <person name="Gwinn M.L."/>
            <person name="Haft D.H."/>
            <person name="Hickey E.K."/>
            <person name="Kolonay J.F."/>
            <person name="Nelson W.C."/>
            <person name="Umayam L.A."/>
            <person name="Ermolaeva M.D."/>
            <person name="Salzberg S.L."/>
            <person name="Delcher A."/>
            <person name="Utterback T.R."/>
            <person name="Weidman J.F."/>
            <person name="Khouri H.M."/>
            <person name="Gill J."/>
            <person name="Mikula A."/>
            <person name="Bishai W."/>
            <person name="Jacobs W.R. Jr."/>
            <person name="Venter J.C."/>
            <person name="Fraser C.M."/>
        </authorList>
    </citation>
    <scope>NUCLEOTIDE SEQUENCE [LARGE SCALE GENOMIC DNA]</scope>
    <source>
        <strain>CDC 1551 / Oshkosh</strain>
    </source>
</reference>